<dbReference type="EC" id="3.6.1.-" evidence="1"/>
<dbReference type="EMBL" id="CP001120">
    <property type="protein sequence ID" value="ACF69706.1"/>
    <property type="molecule type" value="Genomic_DNA"/>
</dbReference>
<dbReference type="RefSeq" id="WP_000381531.1">
    <property type="nucleotide sequence ID" value="NC_011083.1"/>
</dbReference>
<dbReference type="SMR" id="B4TKF7"/>
<dbReference type="KEGG" id="seh:SeHA_C2026"/>
<dbReference type="HOGENOM" id="CLU_040940_5_2_6"/>
<dbReference type="Proteomes" id="UP000001866">
    <property type="component" value="Chromosome"/>
</dbReference>
<dbReference type="GO" id="GO:0010945">
    <property type="term" value="F:coenzyme A diphosphatase activity"/>
    <property type="evidence" value="ECO:0007669"/>
    <property type="project" value="InterPro"/>
</dbReference>
<dbReference type="GO" id="GO:0000287">
    <property type="term" value="F:magnesium ion binding"/>
    <property type="evidence" value="ECO:0007669"/>
    <property type="project" value="UniProtKB-UniRule"/>
</dbReference>
<dbReference type="GO" id="GO:0030145">
    <property type="term" value="F:manganese ion binding"/>
    <property type="evidence" value="ECO:0007669"/>
    <property type="project" value="UniProtKB-UniRule"/>
</dbReference>
<dbReference type="GO" id="GO:0009132">
    <property type="term" value="P:nucleoside diphosphate metabolic process"/>
    <property type="evidence" value="ECO:0007669"/>
    <property type="project" value="InterPro"/>
</dbReference>
<dbReference type="CDD" id="cd03426">
    <property type="entry name" value="NUDIX_CoAse_Nudt7"/>
    <property type="match status" value="1"/>
</dbReference>
<dbReference type="Gene3D" id="3.90.79.10">
    <property type="entry name" value="Nucleoside Triphosphate Pyrophosphohydrolase"/>
    <property type="match status" value="1"/>
</dbReference>
<dbReference type="HAMAP" id="MF_01592">
    <property type="entry name" value="Nudix_NudL"/>
    <property type="match status" value="1"/>
</dbReference>
<dbReference type="InterPro" id="IPR045121">
    <property type="entry name" value="CoAse"/>
</dbReference>
<dbReference type="InterPro" id="IPR015797">
    <property type="entry name" value="NUDIX_hydrolase-like_dom_sf"/>
</dbReference>
<dbReference type="InterPro" id="IPR000086">
    <property type="entry name" value="NUDIX_hydrolase_dom"/>
</dbReference>
<dbReference type="InterPro" id="IPR000059">
    <property type="entry name" value="NUDIX_hydrolase_NudL_CS"/>
</dbReference>
<dbReference type="InterPro" id="IPR023735">
    <property type="entry name" value="Nudix_NudL"/>
</dbReference>
<dbReference type="NCBIfam" id="NF007980">
    <property type="entry name" value="PRK10707.1"/>
    <property type="match status" value="1"/>
</dbReference>
<dbReference type="PANTHER" id="PTHR12992:SF11">
    <property type="entry name" value="MITOCHONDRIAL COENZYME A DIPHOSPHATASE NUDT8"/>
    <property type="match status" value="1"/>
</dbReference>
<dbReference type="PANTHER" id="PTHR12992">
    <property type="entry name" value="NUDIX HYDROLASE"/>
    <property type="match status" value="1"/>
</dbReference>
<dbReference type="Pfam" id="PF00293">
    <property type="entry name" value="NUDIX"/>
    <property type="match status" value="1"/>
</dbReference>
<dbReference type="SUPFAM" id="SSF55811">
    <property type="entry name" value="Nudix"/>
    <property type="match status" value="1"/>
</dbReference>
<dbReference type="PROSITE" id="PS51462">
    <property type="entry name" value="NUDIX"/>
    <property type="match status" value="1"/>
</dbReference>
<dbReference type="PROSITE" id="PS01293">
    <property type="entry name" value="NUDIX_COA"/>
    <property type="match status" value="1"/>
</dbReference>
<organism>
    <name type="scientific">Salmonella heidelberg (strain SL476)</name>
    <dbReference type="NCBI Taxonomy" id="454169"/>
    <lineage>
        <taxon>Bacteria</taxon>
        <taxon>Pseudomonadati</taxon>
        <taxon>Pseudomonadota</taxon>
        <taxon>Gammaproteobacteria</taxon>
        <taxon>Enterobacterales</taxon>
        <taxon>Enterobacteriaceae</taxon>
        <taxon>Salmonella</taxon>
    </lineage>
</organism>
<feature type="chain" id="PRO_1000147824" description="Uncharacterized Nudix hydrolase NudL">
    <location>
        <begin position="1"/>
        <end position="192"/>
    </location>
</feature>
<feature type="domain" description="Nudix hydrolase" evidence="1">
    <location>
        <begin position="29"/>
        <end position="160"/>
    </location>
</feature>
<feature type="short sequence motif" description="Nudix box">
    <location>
        <begin position="67"/>
        <end position="89"/>
    </location>
</feature>
<feature type="binding site" evidence="1">
    <location>
        <position position="83"/>
    </location>
    <ligand>
        <name>Mg(2+)</name>
        <dbReference type="ChEBI" id="CHEBI:18420"/>
    </ligand>
</feature>
<feature type="binding site" evidence="1">
    <location>
        <position position="87"/>
    </location>
    <ligand>
        <name>Mg(2+)</name>
        <dbReference type="ChEBI" id="CHEBI:18420"/>
    </ligand>
</feature>
<sequence length="192" mass="21413">MDTSRLTLDHFLSRFQLLRPQITHETLNQRQAAVLIPVVRRPQPGLLLTQRAIHLRKHAGQVAFPGGAVDSTDASLIAAALREAQEEVAIPPQAVEVIGVLPPVDSVTGFQVTPVVGIIPPNLPWRASEDEVSAVFEMPLAQALQLGRYHPLDVYRRGNSHRVWLSWYEHYFVWGMTANILRELALQIGVKP</sequence>
<evidence type="ECO:0000255" key="1">
    <source>
        <dbReference type="HAMAP-Rule" id="MF_01592"/>
    </source>
</evidence>
<protein>
    <recommendedName>
        <fullName evidence="1">Uncharacterized Nudix hydrolase NudL</fullName>
        <ecNumber evidence="1">3.6.1.-</ecNumber>
    </recommendedName>
</protein>
<proteinExistence type="inferred from homology"/>
<reference key="1">
    <citation type="journal article" date="2011" name="J. Bacteriol.">
        <title>Comparative genomics of 28 Salmonella enterica isolates: evidence for CRISPR-mediated adaptive sublineage evolution.</title>
        <authorList>
            <person name="Fricke W.F."/>
            <person name="Mammel M.K."/>
            <person name="McDermott P.F."/>
            <person name="Tartera C."/>
            <person name="White D.G."/>
            <person name="Leclerc J.E."/>
            <person name="Ravel J."/>
            <person name="Cebula T.A."/>
        </authorList>
    </citation>
    <scope>NUCLEOTIDE SEQUENCE [LARGE SCALE GENOMIC DNA]</scope>
    <source>
        <strain>SL476</strain>
    </source>
</reference>
<comment type="function">
    <text evidence="1">Probably mediates the hydrolysis of some nucleoside diphosphate derivatives.</text>
</comment>
<comment type="cofactor">
    <cofactor evidence="1">
        <name>Mn(2+)</name>
        <dbReference type="ChEBI" id="CHEBI:29035"/>
    </cofactor>
    <cofactor evidence="1">
        <name>Mg(2+)</name>
        <dbReference type="ChEBI" id="CHEBI:18420"/>
    </cofactor>
</comment>
<comment type="similarity">
    <text evidence="1">Belongs to the Nudix hydrolase family. PCD1 subfamily.</text>
</comment>
<keyword id="KW-0378">Hydrolase</keyword>
<keyword id="KW-0460">Magnesium</keyword>
<keyword id="KW-0464">Manganese</keyword>
<keyword id="KW-0479">Metal-binding</keyword>
<gene>
    <name evidence="1" type="primary">nudL</name>
    <name type="ordered locus">SeHA_C2026</name>
</gene>
<accession>B4TKF7</accession>
<name>NUDL_SALHS</name>